<sequence>MNTITVYRLGRVEYEDGLALMHLFSESRRQGLSGDVLLLLEHPPILTLGRAAKRENIVASDAQLAKEGAEVFETNRGGDVTYHGPGQLVGYPIFLLPEDRRDVRRYVRDVERSVMQVLAQWGITAGPIPKWPGVWIGAEGAPDARKIAAIGVHLSRWLTTHGFALNVNTNLDHFQLIVPCGIREAGVTSMQRELGRALPMAEVEEAIANSFCTVFDSERVDAPPPMRTVSIAVVKGRGPEARVLLVRRRPERGGFWQVLTGRLEAGESPAQAAARELEEETGLRVPLVDLDYRHAFALGEALPPQLVEENGFAVHVPPDADVRLGAEHDAFEWVDVPTALERLPFQGLRETVKRATA</sequence>
<evidence type="ECO:0000250" key="1"/>
<evidence type="ECO:0000255" key="2">
    <source>
        <dbReference type="PROSITE-ProRule" id="PRU01067"/>
    </source>
</evidence>
<evidence type="ECO:0000305" key="3"/>
<organism>
    <name type="scientific">Myxococcus xanthus</name>
    <dbReference type="NCBI Taxonomy" id="34"/>
    <lineage>
        <taxon>Bacteria</taxon>
        <taxon>Pseudomonadati</taxon>
        <taxon>Myxococcota</taxon>
        <taxon>Myxococcia</taxon>
        <taxon>Myxococcales</taxon>
        <taxon>Cystobacterineae</taxon>
        <taxon>Myxococcaceae</taxon>
        <taxon>Myxococcus</taxon>
    </lineage>
</organism>
<comment type="function">
    <text evidence="1">Catalyzes the transfer of endogenously produced octanoic acid from octanoyl-acyl-carrier-protein onto the lipoyl domains of lipoate-dependent enzymes. Lipoyl-ACP can also act as a substrate although octanoyl-ACP is likely to be the physiological substrate (By similarity).</text>
</comment>
<comment type="catalytic activity">
    <reaction>
        <text>octanoyl-[ACP] + L-lysyl-[protein] = N(6)-octanoyl-L-lysyl-[protein] + holo-[ACP] + H(+)</text>
        <dbReference type="Rhea" id="RHEA:17665"/>
        <dbReference type="Rhea" id="RHEA-COMP:9636"/>
        <dbReference type="Rhea" id="RHEA-COMP:9685"/>
        <dbReference type="Rhea" id="RHEA-COMP:9752"/>
        <dbReference type="Rhea" id="RHEA-COMP:9928"/>
        <dbReference type="ChEBI" id="CHEBI:15378"/>
        <dbReference type="ChEBI" id="CHEBI:29969"/>
        <dbReference type="ChEBI" id="CHEBI:64479"/>
        <dbReference type="ChEBI" id="CHEBI:78463"/>
        <dbReference type="ChEBI" id="CHEBI:78809"/>
        <dbReference type="EC" id="2.3.1.181"/>
    </reaction>
</comment>
<comment type="pathway">
    <text>Protein modification; protein lipoylation via endogenous pathway; protein N(6)-(lipoyl)lysine from octanoyl-[acyl-carrier-protein]: step 1/2.</text>
</comment>
<comment type="subcellular location">
    <subcellularLocation>
        <location evidence="1">Cytoplasm</location>
    </subcellularLocation>
</comment>
<comment type="miscellaneous">
    <text evidence="1">In the reaction, the free carboxyl group of octanoic acid is attached via an amide linkage to the epsilon-amino group of a specific lysine residue of lipoyl domains of lipoate-dependent enzymes.</text>
</comment>
<comment type="similarity">
    <text evidence="3">In the N-terminal section; belongs to the LipB family.</text>
</comment>
<gene>
    <name type="primary">lipB</name>
</gene>
<protein>
    <recommendedName>
        <fullName>Octanoyltransferase</fullName>
        <ecNumber>2.3.1.181</ecNumber>
    </recommendedName>
    <alternativeName>
        <fullName>Lipoate-protein ligase B</fullName>
    </alternativeName>
    <alternativeName>
        <fullName>Lipoyl/octanoyl transferase</fullName>
    </alternativeName>
    <alternativeName>
        <fullName>Octanoyl-[acyl-carrier-protein]-protein N-octanoyltransferase</fullName>
    </alternativeName>
</protein>
<dbReference type="EC" id="2.3.1.181"/>
<dbReference type="EMBL" id="AF153678">
    <property type="protein sequence ID" value="AAD34635.1"/>
    <property type="molecule type" value="Genomic_DNA"/>
</dbReference>
<dbReference type="RefSeq" id="WP_011554218.1">
    <property type="nucleotide sequence ID" value="NZ_JABFNQ010000025.1"/>
</dbReference>
<dbReference type="SMR" id="Q9X6X4"/>
<dbReference type="GeneID" id="41361532"/>
<dbReference type="OMA" id="WLTTHGF"/>
<dbReference type="UniPathway" id="UPA00538">
    <property type="reaction ID" value="UER00592"/>
</dbReference>
<dbReference type="GO" id="GO:0005737">
    <property type="term" value="C:cytoplasm"/>
    <property type="evidence" value="ECO:0007669"/>
    <property type="project" value="UniProtKB-SubCell"/>
</dbReference>
<dbReference type="GO" id="GO:0016787">
    <property type="term" value="F:hydrolase activity"/>
    <property type="evidence" value="ECO:0007669"/>
    <property type="project" value="UniProtKB-KW"/>
</dbReference>
<dbReference type="GO" id="GO:0033819">
    <property type="term" value="F:lipoyl(octanoyl) transferase activity"/>
    <property type="evidence" value="ECO:0007669"/>
    <property type="project" value="UniProtKB-EC"/>
</dbReference>
<dbReference type="GO" id="GO:0036211">
    <property type="term" value="P:protein modification process"/>
    <property type="evidence" value="ECO:0007669"/>
    <property type="project" value="InterPro"/>
</dbReference>
<dbReference type="CDD" id="cd16444">
    <property type="entry name" value="LipB"/>
    <property type="match status" value="1"/>
</dbReference>
<dbReference type="CDD" id="cd04664">
    <property type="entry name" value="NUDIX_DHNTPase_like"/>
    <property type="match status" value="1"/>
</dbReference>
<dbReference type="Gene3D" id="3.30.930.10">
    <property type="entry name" value="Bira Bifunctional Protein, Domain 2"/>
    <property type="match status" value="1"/>
</dbReference>
<dbReference type="Gene3D" id="3.90.79.10">
    <property type="entry name" value="Nucleoside Triphosphate Pyrophosphohydrolase"/>
    <property type="match status" value="1"/>
</dbReference>
<dbReference type="HAMAP" id="MF_00013">
    <property type="entry name" value="LipB"/>
    <property type="match status" value="1"/>
</dbReference>
<dbReference type="InterPro" id="IPR045864">
    <property type="entry name" value="aa-tRNA-synth_II/BPL/LPL"/>
</dbReference>
<dbReference type="InterPro" id="IPR004143">
    <property type="entry name" value="BPL_LPL_catalytic"/>
</dbReference>
<dbReference type="InterPro" id="IPR020476">
    <property type="entry name" value="Nudix_hydrolase"/>
</dbReference>
<dbReference type="InterPro" id="IPR015797">
    <property type="entry name" value="NUDIX_hydrolase-like_dom_sf"/>
</dbReference>
<dbReference type="InterPro" id="IPR020084">
    <property type="entry name" value="NUDIX_hydrolase_CS"/>
</dbReference>
<dbReference type="InterPro" id="IPR000086">
    <property type="entry name" value="NUDIX_hydrolase_dom"/>
</dbReference>
<dbReference type="InterPro" id="IPR000544">
    <property type="entry name" value="Octanoyltransferase"/>
</dbReference>
<dbReference type="InterPro" id="IPR020605">
    <property type="entry name" value="Octanoyltransferase_CS"/>
</dbReference>
<dbReference type="NCBIfam" id="TIGR00214">
    <property type="entry name" value="lipB"/>
    <property type="match status" value="1"/>
</dbReference>
<dbReference type="NCBIfam" id="NF010925">
    <property type="entry name" value="PRK14345.1"/>
    <property type="match status" value="1"/>
</dbReference>
<dbReference type="PANTHER" id="PTHR10993:SF7">
    <property type="entry name" value="LIPOYLTRANSFERASE 2, MITOCHONDRIAL-RELATED"/>
    <property type="match status" value="1"/>
</dbReference>
<dbReference type="PANTHER" id="PTHR10993">
    <property type="entry name" value="OCTANOYLTRANSFERASE"/>
    <property type="match status" value="1"/>
</dbReference>
<dbReference type="Pfam" id="PF21948">
    <property type="entry name" value="LplA-B_cat"/>
    <property type="match status" value="1"/>
</dbReference>
<dbReference type="Pfam" id="PF00293">
    <property type="entry name" value="NUDIX"/>
    <property type="match status" value="1"/>
</dbReference>
<dbReference type="PRINTS" id="PR00502">
    <property type="entry name" value="NUDIXFAMILY"/>
</dbReference>
<dbReference type="SUPFAM" id="SSF55681">
    <property type="entry name" value="Class II aaRS and biotin synthetases"/>
    <property type="match status" value="1"/>
</dbReference>
<dbReference type="SUPFAM" id="SSF55811">
    <property type="entry name" value="Nudix"/>
    <property type="match status" value="1"/>
</dbReference>
<dbReference type="PROSITE" id="PS51733">
    <property type="entry name" value="BPL_LPL_CATALYTIC"/>
    <property type="match status" value="1"/>
</dbReference>
<dbReference type="PROSITE" id="PS01313">
    <property type="entry name" value="LIPB"/>
    <property type="match status" value="1"/>
</dbReference>
<dbReference type="PROSITE" id="PS51462">
    <property type="entry name" value="NUDIX"/>
    <property type="match status" value="1"/>
</dbReference>
<dbReference type="PROSITE" id="PS00893">
    <property type="entry name" value="NUDIX_BOX"/>
    <property type="match status" value="1"/>
</dbReference>
<accession>Q9X6X4</accession>
<name>LIPB_MYXXA</name>
<reference key="1">
    <citation type="submission" date="1999-05" db="EMBL/GenBank/DDBJ databases">
        <title>Sequence analysis of SR171 mutant of the branched-chain keto acid dehydrogenase complex in Myxococcus xanthus.</title>
        <authorList>
            <person name="Downard J.S."/>
            <person name="Kupfer D.M."/>
            <person name="Davis A.J."/>
            <person name="Roe B.A."/>
        </authorList>
    </citation>
    <scope>NUCLEOTIDE SEQUENCE [GENOMIC DNA]</scope>
</reference>
<keyword id="KW-0012">Acyltransferase</keyword>
<keyword id="KW-0963">Cytoplasm</keyword>
<keyword id="KW-0378">Hydrolase</keyword>
<keyword id="KW-0511">Multifunctional enzyme</keyword>
<keyword id="KW-0808">Transferase</keyword>
<proteinExistence type="inferred from homology"/>
<feature type="chain" id="PRO_0000062852" description="Octanoyltransferase">
    <location>
        <begin position="1"/>
        <end position="357"/>
    </location>
</feature>
<feature type="domain" description="BPL/LPL catalytic" evidence="2">
    <location>
        <begin position="31"/>
        <end position="219"/>
    </location>
</feature>
<feature type="domain" description="Nudix hydrolase">
    <location>
        <begin position="224"/>
        <end position="356"/>
    </location>
</feature>
<feature type="region of interest" description="LipB domain">
    <location>
        <begin position="1"/>
        <end position="222"/>
    </location>
</feature>
<feature type="short sequence motif" description="Nudix box">
    <location>
        <begin position="261"/>
        <end position="282"/>
    </location>
</feature>
<feature type="active site" description="Acyl-thioester intermediate" evidence="1">
    <location>
        <position position="180"/>
    </location>
</feature>
<feature type="binding site" evidence="1">
    <location>
        <begin position="76"/>
        <end position="83"/>
    </location>
    <ligand>
        <name>substrate</name>
    </ligand>
</feature>
<feature type="binding site" evidence="1">
    <location>
        <begin position="149"/>
        <end position="151"/>
    </location>
    <ligand>
        <name>substrate</name>
    </ligand>
</feature>
<feature type="binding site" evidence="1">
    <location>
        <begin position="162"/>
        <end position="164"/>
    </location>
    <ligand>
        <name>substrate</name>
    </ligand>
</feature>
<feature type="site" description="Lowers pKa of active site Cys" evidence="1">
    <location>
        <position position="146"/>
    </location>
</feature>